<gene>
    <name evidence="5" type="primary">NEK3</name>
    <name evidence="9" type="ordered locus">Os07g0176600</name>
    <name evidence="6" type="ordered locus">LOC_Os07g08000</name>
    <name evidence="10" type="ORF">OsJ_23299</name>
    <name evidence="8" type="ORF">P0534H07.24</name>
</gene>
<feature type="chain" id="PRO_0000314047" description="Serine/threonine-protein kinase Nek3">
    <location>
        <begin position="1"/>
        <end position="585"/>
    </location>
</feature>
<feature type="domain" description="Protein kinase" evidence="1">
    <location>
        <begin position="4"/>
        <end position="258"/>
    </location>
</feature>
<feature type="region of interest" description="Disordered" evidence="3">
    <location>
        <begin position="354"/>
        <end position="413"/>
    </location>
</feature>
<feature type="region of interest" description="Disordered" evidence="3">
    <location>
        <begin position="489"/>
        <end position="511"/>
    </location>
</feature>
<feature type="compositionally biased region" description="Polar residues" evidence="3">
    <location>
        <begin position="400"/>
        <end position="413"/>
    </location>
</feature>
<feature type="compositionally biased region" description="Polar residues" evidence="3">
    <location>
        <begin position="498"/>
        <end position="511"/>
    </location>
</feature>
<feature type="active site" description="Proton acceptor" evidence="1 2">
    <location>
        <position position="129"/>
    </location>
</feature>
<feature type="binding site" evidence="1">
    <location>
        <begin position="10"/>
        <end position="18"/>
    </location>
    <ligand>
        <name>ATP</name>
        <dbReference type="ChEBI" id="CHEBI:30616"/>
    </ligand>
</feature>
<feature type="binding site" evidence="1">
    <location>
        <position position="33"/>
    </location>
    <ligand>
        <name>ATP</name>
        <dbReference type="ChEBI" id="CHEBI:30616"/>
    </ligand>
</feature>
<reference key="1">
    <citation type="journal article" date="2005" name="Nature">
        <title>The map-based sequence of the rice genome.</title>
        <authorList>
            <consortium name="International rice genome sequencing project (IRGSP)"/>
        </authorList>
    </citation>
    <scope>NUCLEOTIDE SEQUENCE [LARGE SCALE GENOMIC DNA]</scope>
    <source>
        <strain>cv. Nipponbare</strain>
    </source>
</reference>
<reference key="2">
    <citation type="journal article" date="2008" name="Nucleic Acids Res.">
        <title>The rice annotation project database (RAP-DB): 2008 update.</title>
        <authorList>
            <consortium name="The rice annotation project (RAP)"/>
        </authorList>
    </citation>
    <scope>GENOME REANNOTATION</scope>
    <source>
        <strain>cv. Nipponbare</strain>
    </source>
</reference>
<reference key="3">
    <citation type="journal article" date="2013" name="Rice">
        <title>Improvement of the Oryza sativa Nipponbare reference genome using next generation sequence and optical map data.</title>
        <authorList>
            <person name="Kawahara Y."/>
            <person name="de la Bastide M."/>
            <person name="Hamilton J.P."/>
            <person name="Kanamori H."/>
            <person name="McCombie W.R."/>
            <person name="Ouyang S."/>
            <person name="Schwartz D.C."/>
            <person name="Tanaka T."/>
            <person name="Wu J."/>
            <person name="Zhou S."/>
            <person name="Childs K.L."/>
            <person name="Davidson R.M."/>
            <person name="Lin H."/>
            <person name="Quesada-Ocampo L."/>
            <person name="Vaillancourt B."/>
            <person name="Sakai H."/>
            <person name="Lee S.S."/>
            <person name="Kim J."/>
            <person name="Numa H."/>
            <person name="Itoh T."/>
            <person name="Buell C.R."/>
            <person name="Matsumoto T."/>
        </authorList>
    </citation>
    <scope>GENOME REANNOTATION</scope>
    <source>
        <strain>cv. Nipponbare</strain>
    </source>
</reference>
<reference key="4">
    <citation type="journal article" date="2005" name="PLoS Biol.">
        <title>The genomes of Oryza sativa: a history of duplications.</title>
        <authorList>
            <person name="Yu J."/>
            <person name="Wang J."/>
            <person name="Lin W."/>
            <person name="Li S."/>
            <person name="Li H."/>
            <person name="Zhou J."/>
            <person name="Ni P."/>
            <person name="Dong W."/>
            <person name="Hu S."/>
            <person name="Zeng C."/>
            <person name="Zhang J."/>
            <person name="Zhang Y."/>
            <person name="Li R."/>
            <person name="Xu Z."/>
            <person name="Li S."/>
            <person name="Li X."/>
            <person name="Zheng H."/>
            <person name="Cong L."/>
            <person name="Lin L."/>
            <person name="Yin J."/>
            <person name="Geng J."/>
            <person name="Li G."/>
            <person name="Shi J."/>
            <person name="Liu J."/>
            <person name="Lv H."/>
            <person name="Li J."/>
            <person name="Wang J."/>
            <person name="Deng Y."/>
            <person name="Ran L."/>
            <person name="Shi X."/>
            <person name="Wang X."/>
            <person name="Wu Q."/>
            <person name="Li C."/>
            <person name="Ren X."/>
            <person name="Wang J."/>
            <person name="Wang X."/>
            <person name="Li D."/>
            <person name="Liu D."/>
            <person name="Zhang X."/>
            <person name="Ji Z."/>
            <person name="Zhao W."/>
            <person name="Sun Y."/>
            <person name="Zhang Z."/>
            <person name="Bao J."/>
            <person name="Han Y."/>
            <person name="Dong L."/>
            <person name="Ji J."/>
            <person name="Chen P."/>
            <person name="Wu S."/>
            <person name="Liu J."/>
            <person name="Xiao Y."/>
            <person name="Bu D."/>
            <person name="Tan J."/>
            <person name="Yang L."/>
            <person name="Ye C."/>
            <person name="Zhang J."/>
            <person name="Xu J."/>
            <person name="Zhou Y."/>
            <person name="Yu Y."/>
            <person name="Zhang B."/>
            <person name="Zhuang S."/>
            <person name="Wei H."/>
            <person name="Liu B."/>
            <person name="Lei M."/>
            <person name="Yu H."/>
            <person name="Li Y."/>
            <person name="Xu H."/>
            <person name="Wei S."/>
            <person name="He X."/>
            <person name="Fang L."/>
            <person name="Zhang Z."/>
            <person name="Zhang Y."/>
            <person name="Huang X."/>
            <person name="Su Z."/>
            <person name="Tong W."/>
            <person name="Li J."/>
            <person name="Tong Z."/>
            <person name="Li S."/>
            <person name="Ye J."/>
            <person name="Wang L."/>
            <person name="Fang L."/>
            <person name="Lei T."/>
            <person name="Chen C.-S."/>
            <person name="Chen H.-C."/>
            <person name="Xu Z."/>
            <person name="Li H."/>
            <person name="Huang H."/>
            <person name="Zhang F."/>
            <person name="Xu H."/>
            <person name="Li N."/>
            <person name="Zhao C."/>
            <person name="Li S."/>
            <person name="Dong L."/>
            <person name="Huang Y."/>
            <person name="Li L."/>
            <person name="Xi Y."/>
            <person name="Qi Q."/>
            <person name="Li W."/>
            <person name="Zhang B."/>
            <person name="Hu W."/>
            <person name="Zhang Y."/>
            <person name="Tian X."/>
            <person name="Jiao Y."/>
            <person name="Liang X."/>
            <person name="Jin J."/>
            <person name="Gao L."/>
            <person name="Zheng W."/>
            <person name="Hao B."/>
            <person name="Liu S.-M."/>
            <person name="Wang W."/>
            <person name="Yuan L."/>
            <person name="Cao M."/>
            <person name="McDermott J."/>
            <person name="Samudrala R."/>
            <person name="Wang J."/>
            <person name="Wong G.K.-S."/>
            <person name="Yang H."/>
        </authorList>
    </citation>
    <scope>NUCLEOTIDE SEQUENCE [LARGE SCALE GENOMIC DNA]</scope>
    <source>
        <strain>cv. Nipponbare</strain>
    </source>
</reference>
<reference key="5">
    <citation type="journal article" date="2003" name="Science">
        <title>Collection, mapping, and annotation of over 28,000 cDNA clones from japonica rice.</title>
        <authorList>
            <consortium name="The rice full-length cDNA consortium"/>
        </authorList>
    </citation>
    <scope>NUCLEOTIDE SEQUENCE [LARGE SCALE MRNA]</scope>
    <source>
        <strain>cv. Nipponbare</strain>
    </source>
</reference>
<reference key="6">
    <citation type="journal article" date="2007" name="Plant J.">
        <title>Members of the plant NIMA-related kinases are involved in organ development and vascularization in poplar, Arabidopsis and rice.</title>
        <authorList>
            <person name="Vigneault F."/>
            <person name="Lachance D."/>
            <person name="Cloutier M."/>
            <person name="Pelletier G."/>
            <person name="Levasseur C."/>
            <person name="Seguin A."/>
        </authorList>
    </citation>
    <scope>FUNCTION</scope>
    <scope>GENE FAMILY</scope>
    <scope>NOMENCLATURE</scope>
</reference>
<reference key="7">
    <citation type="journal article" date="2009" name="Plant Cell Physiol.">
        <title>Cytoplasmic male sterility-related protein kinase, OsNek3, is regulated downstream of mitochondrial protein phosphatase 2C, DCW11.</title>
        <authorList>
            <person name="Fujii S."/>
            <person name="Yamada M."/>
            <person name="Toriyama K."/>
        </authorList>
    </citation>
    <scope>FUNCTION</scope>
    <scope>INTERACTION WITH PLIM2B</scope>
    <scope>TISSUE SPECIFICITY</scope>
    <scope>DEVELOPMENTAL STAGE</scope>
</reference>
<keyword id="KW-0067">ATP-binding</keyword>
<keyword id="KW-0418">Kinase</keyword>
<keyword id="KW-0547">Nucleotide-binding</keyword>
<keyword id="KW-1185">Reference proteome</keyword>
<keyword id="KW-0723">Serine/threonine-protein kinase</keyword>
<keyword id="KW-0808">Transferase</keyword>
<sequence>MEQYEVLEQIGKGSFGSALLVRHKVEKKRYVLKKIRLARQTDRCRRSAHQEMELIAKVRNPYIVEYKDSWVEKGCYVCIVIGYCEGGDMSEAIKKANSNYFSEERLCMWLVQLLMALDYLHVNHILHRDVKCSNIFLTKDQNIRLGDFGLAKVLTSDDLTSSVVGTPSYMCPELLADIPYGSKSDIWSLGCCLYEMTALKPAFKAFDMQTLINKISKSVLAPLPTIYSGAFRGLIKSMLRKSPDHRPSAAELLKHPHLQPFVLELQLKSSPARNLFPDTNKASCSDDENNWKAKYSKSHSFKVDRIVKVDKVAANNGHPSSTGTAKDYQELLKQPMDELLGQLTEKVVDEVIHGNHSRVTKSPAPTPRRASSTPRIRLEPSKTFHARAAETPPSKCSLERASQPTRRASTPVNMLQTPEKRQGADILTRLKSPDVSVNSPRIDRIAEFPIPSFDDEQLHPTTKLKLYPPSITDQSITKDKCTFQVLRSDSSKNHTGDSSDPSILGTDSNPLITSSSDWMKQRRFDTTSYRQRAEALEGLLEFSAQLLQQERFEELGILLKPFGPGKASPRETAIWLSKSFKGTGL</sequence>
<proteinExistence type="evidence at protein level"/>
<comment type="function">
    <text evidence="4 7">May be involved in plant development processes (Probable). May function downstream of DCW11 in retrograde signaling from the mitochondria to the nucleus. Seems to be involved in the mechanism of cytoplasmic male sterility (CMS) occurrence (PubMed:19224952).</text>
</comment>
<comment type="catalytic activity">
    <reaction evidence="6">
        <text>L-seryl-[protein] + ATP = O-phospho-L-seryl-[protein] + ADP + H(+)</text>
        <dbReference type="Rhea" id="RHEA:17989"/>
        <dbReference type="Rhea" id="RHEA-COMP:9863"/>
        <dbReference type="Rhea" id="RHEA-COMP:11604"/>
        <dbReference type="ChEBI" id="CHEBI:15378"/>
        <dbReference type="ChEBI" id="CHEBI:29999"/>
        <dbReference type="ChEBI" id="CHEBI:30616"/>
        <dbReference type="ChEBI" id="CHEBI:83421"/>
        <dbReference type="ChEBI" id="CHEBI:456216"/>
        <dbReference type="EC" id="2.7.11.1"/>
    </reaction>
</comment>
<comment type="catalytic activity">
    <reaction evidence="6">
        <text>L-threonyl-[protein] + ATP = O-phospho-L-threonyl-[protein] + ADP + H(+)</text>
        <dbReference type="Rhea" id="RHEA:46608"/>
        <dbReference type="Rhea" id="RHEA-COMP:11060"/>
        <dbReference type="Rhea" id="RHEA-COMP:11605"/>
        <dbReference type="ChEBI" id="CHEBI:15378"/>
        <dbReference type="ChEBI" id="CHEBI:30013"/>
        <dbReference type="ChEBI" id="CHEBI:30616"/>
        <dbReference type="ChEBI" id="CHEBI:61977"/>
        <dbReference type="ChEBI" id="CHEBI:456216"/>
        <dbReference type="EC" id="2.7.11.1"/>
    </reaction>
</comment>
<comment type="subunit">
    <text evidence="4">Interacts with PLIM2B.</text>
</comment>
<comment type="tissue specificity">
    <text evidence="4">Expressed in pollen grains.</text>
</comment>
<comment type="developmental stage">
    <text evidence="4">Expressed in anthers from the bi-cellular to the tri-cellular pollen stage.</text>
</comment>
<comment type="miscellaneous">
    <text evidence="4">Expression in anthers at the tri-cellular pollen stage is down-regulated in cytoplasmic male sterility (CMS) rice lines.</text>
</comment>
<comment type="similarity">
    <text evidence="6">Belongs to the protein kinase superfamily. NEK Ser/Thr protein kinase family. NIMA subfamily.</text>
</comment>
<organism>
    <name type="scientific">Oryza sativa subsp. japonica</name>
    <name type="common">Rice</name>
    <dbReference type="NCBI Taxonomy" id="39947"/>
    <lineage>
        <taxon>Eukaryota</taxon>
        <taxon>Viridiplantae</taxon>
        <taxon>Streptophyta</taxon>
        <taxon>Embryophyta</taxon>
        <taxon>Tracheophyta</taxon>
        <taxon>Spermatophyta</taxon>
        <taxon>Magnoliopsida</taxon>
        <taxon>Liliopsida</taxon>
        <taxon>Poales</taxon>
        <taxon>Poaceae</taxon>
        <taxon>BOP clade</taxon>
        <taxon>Oryzoideae</taxon>
        <taxon>Oryzeae</taxon>
        <taxon>Oryzinae</taxon>
        <taxon>Oryza</taxon>
        <taxon>Oryza sativa</taxon>
    </lineage>
</organism>
<dbReference type="EC" id="2.7.11.1" evidence="6"/>
<dbReference type="EMBL" id="AP004307">
    <property type="protein sequence ID" value="BAC83436.1"/>
    <property type="molecule type" value="Genomic_DNA"/>
</dbReference>
<dbReference type="EMBL" id="AP008213">
    <property type="protein sequence ID" value="BAF20936.1"/>
    <property type="molecule type" value="Genomic_DNA"/>
</dbReference>
<dbReference type="EMBL" id="AP014963">
    <property type="protein sequence ID" value="BAT00290.1"/>
    <property type="molecule type" value="Genomic_DNA"/>
</dbReference>
<dbReference type="EMBL" id="CM000144">
    <property type="protein sequence ID" value="EEE66668.1"/>
    <property type="molecule type" value="Genomic_DNA"/>
</dbReference>
<dbReference type="EMBL" id="AK066812">
    <property type="protein sequence ID" value="BAG90133.1"/>
    <property type="molecule type" value="mRNA"/>
</dbReference>
<dbReference type="EMBL" id="AK067073">
    <property type="protein sequence ID" value="BAG90253.1"/>
    <property type="molecule type" value="mRNA"/>
</dbReference>
<dbReference type="RefSeq" id="XP_015645555.1">
    <property type="nucleotide sequence ID" value="XM_015790069.1"/>
</dbReference>
<dbReference type="SMR" id="Q6ZEZ5"/>
<dbReference type="BioGRID" id="811579">
    <property type="interactions" value="1"/>
</dbReference>
<dbReference type="FunCoup" id="Q6ZEZ5">
    <property type="interactions" value="820"/>
</dbReference>
<dbReference type="STRING" id="39947.Q6ZEZ5"/>
<dbReference type="PaxDb" id="39947-Q6ZEZ5"/>
<dbReference type="EnsemblPlants" id="Os07t0176600-01">
    <property type="protein sequence ID" value="Os07t0176600-01"/>
    <property type="gene ID" value="Os07g0176600"/>
</dbReference>
<dbReference type="Gramene" id="Os07t0176600-01">
    <property type="protein sequence ID" value="Os07t0176600-01"/>
    <property type="gene ID" value="Os07g0176600"/>
</dbReference>
<dbReference type="KEGG" id="dosa:Os07g0176600"/>
<dbReference type="eggNOG" id="KOG0589">
    <property type="taxonomic scope" value="Eukaryota"/>
</dbReference>
<dbReference type="HOGENOM" id="CLU_000288_128_3_1"/>
<dbReference type="InParanoid" id="Q6ZEZ5"/>
<dbReference type="OMA" id="EVIHDKY"/>
<dbReference type="OrthoDB" id="248923at2759"/>
<dbReference type="Proteomes" id="UP000000763">
    <property type="component" value="Chromosome 7"/>
</dbReference>
<dbReference type="Proteomes" id="UP000007752">
    <property type="component" value="Chromosome 7"/>
</dbReference>
<dbReference type="Proteomes" id="UP000059680">
    <property type="component" value="Chromosome 7"/>
</dbReference>
<dbReference type="GO" id="GO:0005524">
    <property type="term" value="F:ATP binding"/>
    <property type="evidence" value="ECO:0007669"/>
    <property type="project" value="UniProtKB-KW"/>
</dbReference>
<dbReference type="GO" id="GO:0106310">
    <property type="term" value="F:protein serine kinase activity"/>
    <property type="evidence" value="ECO:0007669"/>
    <property type="project" value="RHEA"/>
</dbReference>
<dbReference type="GO" id="GO:0004674">
    <property type="term" value="F:protein serine/threonine kinase activity"/>
    <property type="evidence" value="ECO:0000318"/>
    <property type="project" value="GO_Central"/>
</dbReference>
<dbReference type="CDD" id="cd08215">
    <property type="entry name" value="STKc_Nek"/>
    <property type="match status" value="1"/>
</dbReference>
<dbReference type="FunFam" id="1.10.510.10:FF:001795">
    <property type="entry name" value="Serine/threonine-protein kinase Nek1"/>
    <property type="match status" value="1"/>
</dbReference>
<dbReference type="FunFam" id="3.30.200.20:FF:000108">
    <property type="entry name" value="Serine/threonine-protein kinase Nek2"/>
    <property type="match status" value="1"/>
</dbReference>
<dbReference type="Gene3D" id="3.30.200.20">
    <property type="entry name" value="Phosphorylase Kinase, domain 1"/>
    <property type="match status" value="1"/>
</dbReference>
<dbReference type="Gene3D" id="1.10.510.10">
    <property type="entry name" value="Transferase(Phosphotransferase) domain 1"/>
    <property type="match status" value="1"/>
</dbReference>
<dbReference type="InterPro" id="IPR011009">
    <property type="entry name" value="Kinase-like_dom_sf"/>
</dbReference>
<dbReference type="InterPro" id="IPR050660">
    <property type="entry name" value="NEK_Ser/Thr_kinase"/>
</dbReference>
<dbReference type="InterPro" id="IPR000719">
    <property type="entry name" value="Prot_kinase_dom"/>
</dbReference>
<dbReference type="InterPro" id="IPR017441">
    <property type="entry name" value="Protein_kinase_ATP_BS"/>
</dbReference>
<dbReference type="InterPro" id="IPR008271">
    <property type="entry name" value="Ser/Thr_kinase_AS"/>
</dbReference>
<dbReference type="PANTHER" id="PTHR43671">
    <property type="entry name" value="SERINE/THREONINE-PROTEIN KINASE NEK"/>
    <property type="match status" value="1"/>
</dbReference>
<dbReference type="PANTHER" id="PTHR43671:SF71">
    <property type="entry name" value="SERINE_THREONINE-PROTEIN KINASE NEK3"/>
    <property type="match status" value="1"/>
</dbReference>
<dbReference type="Pfam" id="PF00069">
    <property type="entry name" value="Pkinase"/>
    <property type="match status" value="1"/>
</dbReference>
<dbReference type="SMART" id="SM00220">
    <property type="entry name" value="S_TKc"/>
    <property type="match status" value="1"/>
</dbReference>
<dbReference type="SUPFAM" id="SSF56112">
    <property type="entry name" value="Protein kinase-like (PK-like)"/>
    <property type="match status" value="1"/>
</dbReference>
<dbReference type="PROSITE" id="PS00107">
    <property type="entry name" value="PROTEIN_KINASE_ATP"/>
    <property type="match status" value="1"/>
</dbReference>
<dbReference type="PROSITE" id="PS50011">
    <property type="entry name" value="PROTEIN_KINASE_DOM"/>
    <property type="match status" value="1"/>
</dbReference>
<dbReference type="PROSITE" id="PS00108">
    <property type="entry name" value="PROTEIN_KINASE_ST"/>
    <property type="match status" value="1"/>
</dbReference>
<protein>
    <recommendedName>
        <fullName evidence="6">Serine/threonine-protein kinase Nek3</fullName>
        <ecNumber evidence="6">2.7.11.1</ecNumber>
    </recommendedName>
    <alternativeName>
        <fullName evidence="5">NimA-related protein kinase 3</fullName>
    </alternativeName>
    <alternativeName>
        <fullName evidence="5">OsNek3</fullName>
    </alternativeName>
</protein>
<evidence type="ECO:0000255" key="1">
    <source>
        <dbReference type="PROSITE-ProRule" id="PRU00159"/>
    </source>
</evidence>
<evidence type="ECO:0000255" key="2">
    <source>
        <dbReference type="PROSITE-ProRule" id="PRU10027"/>
    </source>
</evidence>
<evidence type="ECO:0000256" key="3">
    <source>
        <dbReference type="SAM" id="MobiDB-lite"/>
    </source>
</evidence>
<evidence type="ECO:0000269" key="4">
    <source>
    </source>
</evidence>
<evidence type="ECO:0000303" key="5">
    <source>
    </source>
</evidence>
<evidence type="ECO:0000305" key="6"/>
<evidence type="ECO:0000305" key="7">
    <source>
    </source>
</evidence>
<evidence type="ECO:0000312" key="8">
    <source>
        <dbReference type="EMBL" id="BAC83436.1"/>
    </source>
</evidence>
<evidence type="ECO:0000312" key="9">
    <source>
        <dbReference type="EMBL" id="BAT00290.1"/>
    </source>
</evidence>
<evidence type="ECO:0000312" key="10">
    <source>
        <dbReference type="EMBL" id="EEE66668.1"/>
    </source>
</evidence>
<name>NEK3_ORYSJ</name>
<accession>Q6ZEZ5</accession>
<accession>B7ECN6</accession>